<evidence type="ECO:0000250" key="1"/>
<evidence type="ECO:0000305" key="2"/>
<organism>
    <name type="scientific">Saccharopolyspora erythraea (strain ATCC 11635 / DSM 40517 / JCM 4748 / NBRC 13426 / NCIMB 8594 / NRRL 2338)</name>
    <dbReference type="NCBI Taxonomy" id="405948"/>
    <lineage>
        <taxon>Bacteria</taxon>
        <taxon>Bacillati</taxon>
        <taxon>Actinomycetota</taxon>
        <taxon>Actinomycetes</taxon>
        <taxon>Pseudonocardiales</taxon>
        <taxon>Pseudonocardiaceae</taxon>
        <taxon>Saccharopolyspora</taxon>
    </lineage>
</organism>
<name>RRAAH_SACEN</name>
<proteinExistence type="inferred from homology"/>
<keyword id="KW-0456">Lyase</keyword>
<keyword id="KW-0479">Metal-binding</keyword>
<keyword id="KW-1185">Reference proteome</keyword>
<comment type="function">
    <text evidence="1">Catalyzes the aldol cleavage of 4-hydroxy-4-methyl-2-oxoglutarate (HMG) into 2 molecules of pyruvate. Also contains a secondary oxaloacetate (OAA) decarboxylase activity due to the common pyruvate enolate transition state formed following C-C bond cleavage in the retro-aldol and decarboxylation reactions (By similarity).</text>
</comment>
<comment type="catalytic activity">
    <reaction>
        <text>4-hydroxy-4-methyl-2-oxoglutarate = 2 pyruvate</text>
        <dbReference type="Rhea" id="RHEA:22748"/>
        <dbReference type="ChEBI" id="CHEBI:15361"/>
        <dbReference type="ChEBI" id="CHEBI:58276"/>
        <dbReference type="EC" id="4.1.3.17"/>
    </reaction>
</comment>
<comment type="catalytic activity">
    <reaction>
        <text>oxaloacetate + H(+) = pyruvate + CO2</text>
        <dbReference type="Rhea" id="RHEA:15641"/>
        <dbReference type="ChEBI" id="CHEBI:15361"/>
        <dbReference type="ChEBI" id="CHEBI:15378"/>
        <dbReference type="ChEBI" id="CHEBI:16452"/>
        <dbReference type="ChEBI" id="CHEBI:16526"/>
        <dbReference type="EC" id="4.1.1.112"/>
    </reaction>
</comment>
<comment type="cofactor">
    <cofactor evidence="1">
        <name>a divalent metal cation</name>
        <dbReference type="ChEBI" id="CHEBI:60240"/>
    </cofactor>
    <text evidence="1">Divalent metal cation.</text>
</comment>
<comment type="subunit">
    <text evidence="1">Homotrimer.</text>
</comment>
<comment type="similarity">
    <text evidence="2">Belongs to the class II aldolase/RraA-like family.</text>
</comment>
<reference key="1">
    <citation type="journal article" date="2007" name="Nat. Biotechnol.">
        <title>Complete genome sequence of the erythromycin-producing bacterium Saccharopolyspora erythraea NRRL23338.</title>
        <authorList>
            <person name="Oliynyk M."/>
            <person name="Samborskyy M."/>
            <person name="Lester J.B."/>
            <person name="Mironenko T."/>
            <person name="Scott N."/>
            <person name="Dickens S."/>
            <person name="Haydock S.F."/>
            <person name="Leadlay P.F."/>
        </authorList>
    </citation>
    <scope>NUCLEOTIDE SEQUENCE [LARGE SCALE GENOMIC DNA]</scope>
    <source>
        <strain>ATCC 11635 / DSM 40517 / JCM 4748 / NBRC 13426 / NCIMB 8594 / NRRL 2338</strain>
    </source>
</reference>
<dbReference type="EC" id="4.1.3.17"/>
<dbReference type="EC" id="4.1.1.112"/>
<dbReference type="EMBL" id="AM420293">
    <property type="protein sequence ID" value="CAM01455.1"/>
    <property type="molecule type" value="Genomic_DNA"/>
</dbReference>
<dbReference type="RefSeq" id="WP_009942971.1">
    <property type="nucleotide sequence ID" value="NC_009142.1"/>
</dbReference>
<dbReference type="SMR" id="A4FBN0"/>
<dbReference type="STRING" id="405948.SACE_2149"/>
<dbReference type="KEGG" id="sen:SACE_2149"/>
<dbReference type="eggNOG" id="COG0684">
    <property type="taxonomic scope" value="Bacteria"/>
</dbReference>
<dbReference type="HOGENOM" id="CLU_072626_4_0_11"/>
<dbReference type="OrthoDB" id="943692at2"/>
<dbReference type="Proteomes" id="UP000006728">
    <property type="component" value="Chromosome"/>
</dbReference>
<dbReference type="GO" id="GO:0047443">
    <property type="term" value="F:4-hydroxy-4-methyl-2-oxoglutarate aldolase activity"/>
    <property type="evidence" value="ECO:0007669"/>
    <property type="project" value="UniProtKB-EC"/>
</dbReference>
<dbReference type="GO" id="GO:0046872">
    <property type="term" value="F:metal ion binding"/>
    <property type="evidence" value="ECO:0007669"/>
    <property type="project" value="UniProtKB-KW"/>
</dbReference>
<dbReference type="GO" id="GO:0008948">
    <property type="term" value="F:oxaloacetate decarboxylase activity"/>
    <property type="evidence" value="ECO:0007669"/>
    <property type="project" value="UniProtKB-EC"/>
</dbReference>
<dbReference type="GO" id="GO:0008428">
    <property type="term" value="F:ribonuclease inhibitor activity"/>
    <property type="evidence" value="ECO:0007669"/>
    <property type="project" value="InterPro"/>
</dbReference>
<dbReference type="GO" id="GO:0051252">
    <property type="term" value="P:regulation of RNA metabolic process"/>
    <property type="evidence" value="ECO:0007669"/>
    <property type="project" value="InterPro"/>
</dbReference>
<dbReference type="CDD" id="cd16841">
    <property type="entry name" value="RraA_family"/>
    <property type="match status" value="1"/>
</dbReference>
<dbReference type="Gene3D" id="3.50.30.40">
    <property type="entry name" value="Ribonuclease E inhibitor RraA/RraA-like"/>
    <property type="match status" value="1"/>
</dbReference>
<dbReference type="InterPro" id="IPR010203">
    <property type="entry name" value="RraA"/>
</dbReference>
<dbReference type="InterPro" id="IPR005493">
    <property type="entry name" value="RraA/RraA-like"/>
</dbReference>
<dbReference type="InterPro" id="IPR036704">
    <property type="entry name" value="RraA/RraA-like_sf"/>
</dbReference>
<dbReference type="NCBIfam" id="TIGR01935">
    <property type="entry name" value="NOT-MenG"/>
    <property type="match status" value="1"/>
</dbReference>
<dbReference type="NCBIfam" id="NF006875">
    <property type="entry name" value="PRK09372.1"/>
    <property type="match status" value="1"/>
</dbReference>
<dbReference type="PANTHER" id="PTHR33254">
    <property type="entry name" value="4-HYDROXY-4-METHYL-2-OXOGLUTARATE ALDOLASE 3-RELATED"/>
    <property type="match status" value="1"/>
</dbReference>
<dbReference type="PANTHER" id="PTHR33254:SF4">
    <property type="entry name" value="4-HYDROXY-4-METHYL-2-OXOGLUTARATE ALDOLASE 3-RELATED"/>
    <property type="match status" value="1"/>
</dbReference>
<dbReference type="Pfam" id="PF03737">
    <property type="entry name" value="RraA-like"/>
    <property type="match status" value="1"/>
</dbReference>
<dbReference type="SUPFAM" id="SSF89562">
    <property type="entry name" value="RraA-like"/>
    <property type="match status" value="1"/>
</dbReference>
<protein>
    <recommendedName>
        <fullName>Putative 4-hydroxy-4-methyl-2-oxoglutarate aldolase</fullName>
        <shortName>HMG aldolase</shortName>
        <ecNumber>4.1.3.17</ecNumber>
    </recommendedName>
    <alternativeName>
        <fullName>Oxaloacetate decarboxylase</fullName>
        <shortName>OAA decarboxylase</shortName>
        <ecNumber>4.1.1.112</ecNumber>
    </alternativeName>
    <alternativeName>
        <fullName>Regulator of ribonuclease activity homolog</fullName>
    </alternativeName>
    <alternativeName>
        <fullName>RraA-like protein</fullName>
    </alternativeName>
</protein>
<accession>A4FBN0</accession>
<feature type="chain" id="PRO_1000194870" description="Putative 4-hydroxy-4-methyl-2-oxoglutarate aldolase">
    <location>
        <begin position="1"/>
        <end position="158"/>
    </location>
</feature>
<feature type="binding site" evidence="1">
    <location>
        <begin position="75"/>
        <end position="78"/>
    </location>
    <ligand>
        <name>substrate</name>
    </ligand>
</feature>
<feature type="binding site" evidence="1">
    <location>
        <position position="97"/>
    </location>
    <ligand>
        <name>substrate</name>
    </ligand>
</feature>
<feature type="binding site" evidence="1">
    <location>
        <position position="98"/>
    </location>
    <ligand>
        <name>a divalent metal cation</name>
        <dbReference type="ChEBI" id="CHEBI:60240"/>
    </ligand>
</feature>
<sequence>MDLSTADLADREGPSVRSCDVQLRNYGGRAVFSGRIRTVRCFQDNALLKQVLSGPGEGDVLVVDGGGSVHTALIGDLIAELGRSNGWSGVVVHGAVRDSAVLAGMEFGVKALGTNPRKSTKTGEGVLDEVVSFGGVDFVPGEHLVSDTDGIVVVASAD</sequence>
<gene>
    <name type="ordered locus">SACE_2149</name>
</gene>